<feature type="chain" id="PRO_0000345867" description="tRNA modification GTPase MnmE">
    <location>
        <begin position="1"/>
        <end position="473"/>
    </location>
</feature>
<feature type="domain" description="TrmE-type G">
    <location>
        <begin position="230"/>
        <end position="394"/>
    </location>
</feature>
<feature type="binding site" evidence="1">
    <location>
        <position position="30"/>
    </location>
    <ligand>
        <name>(6S)-5-formyl-5,6,7,8-tetrahydrofolate</name>
        <dbReference type="ChEBI" id="CHEBI:57457"/>
    </ligand>
</feature>
<feature type="binding site" evidence="1">
    <location>
        <position position="95"/>
    </location>
    <ligand>
        <name>(6S)-5-formyl-5,6,7,8-tetrahydrofolate</name>
        <dbReference type="ChEBI" id="CHEBI:57457"/>
    </ligand>
</feature>
<feature type="binding site" evidence="1">
    <location>
        <position position="134"/>
    </location>
    <ligand>
        <name>(6S)-5-formyl-5,6,7,8-tetrahydrofolate</name>
        <dbReference type="ChEBI" id="CHEBI:57457"/>
    </ligand>
</feature>
<feature type="binding site" evidence="1">
    <location>
        <begin position="240"/>
        <end position="245"/>
    </location>
    <ligand>
        <name>GTP</name>
        <dbReference type="ChEBI" id="CHEBI:37565"/>
    </ligand>
</feature>
<feature type="binding site" evidence="1">
    <location>
        <position position="244"/>
    </location>
    <ligand>
        <name>Mg(2+)</name>
        <dbReference type="ChEBI" id="CHEBI:18420"/>
    </ligand>
</feature>
<feature type="binding site" evidence="1">
    <location>
        <begin position="259"/>
        <end position="265"/>
    </location>
    <ligand>
        <name>GTP</name>
        <dbReference type="ChEBI" id="CHEBI:37565"/>
    </ligand>
</feature>
<feature type="binding site" evidence="1">
    <location>
        <position position="265"/>
    </location>
    <ligand>
        <name>Mg(2+)</name>
        <dbReference type="ChEBI" id="CHEBI:18420"/>
    </ligand>
</feature>
<feature type="binding site" evidence="1">
    <location>
        <begin position="284"/>
        <end position="287"/>
    </location>
    <ligand>
        <name>GTP</name>
        <dbReference type="ChEBI" id="CHEBI:37565"/>
    </ligand>
</feature>
<feature type="binding site" evidence="1">
    <location>
        <position position="473"/>
    </location>
    <ligand>
        <name>(6S)-5-formyl-5,6,7,8-tetrahydrofolate</name>
        <dbReference type="ChEBI" id="CHEBI:57457"/>
    </ligand>
</feature>
<organism>
    <name type="scientific">Chlorobium luteolum (strain DSM 273 / BCRC 81028 / 2530)</name>
    <name type="common">Pelodictyon luteolum</name>
    <dbReference type="NCBI Taxonomy" id="319225"/>
    <lineage>
        <taxon>Bacteria</taxon>
        <taxon>Pseudomonadati</taxon>
        <taxon>Chlorobiota</taxon>
        <taxon>Chlorobiia</taxon>
        <taxon>Chlorobiales</taxon>
        <taxon>Chlorobiaceae</taxon>
        <taxon>Chlorobium/Pelodictyon group</taxon>
        <taxon>Pelodictyon</taxon>
    </lineage>
</organism>
<comment type="function">
    <text evidence="1">Exhibits a very high intrinsic GTPase hydrolysis rate. Involved in the addition of a carboxymethylaminomethyl (cmnm) group at the wobble position (U34) of certain tRNAs, forming tRNA-cmnm(5)s(2)U34.</text>
</comment>
<comment type="cofactor">
    <cofactor evidence="1">
        <name>K(+)</name>
        <dbReference type="ChEBI" id="CHEBI:29103"/>
    </cofactor>
    <text evidence="1">Binds 1 potassium ion per subunit.</text>
</comment>
<comment type="subunit">
    <text evidence="1">Homodimer. Heterotetramer of two MnmE and two MnmG subunits.</text>
</comment>
<comment type="subcellular location">
    <subcellularLocation>
        <location evidence="1">Cytoplasm</location>
    </subcellularLocation>
</comment>
<comment type="similarity">
    <text evidence="1">Belongs to the TRAFAC class TrmE-Era-EngA-EngB-Septin-like GTPase superfamily. TrmE GTPase family.</text>
</comment>
<evidence type="ECO:0000255" key="1">
    <source>
        <dbReference type="HAMAP-Rule" id="MF_00379"/>
    </source>
</evidence>
<keyword id="KW-0963">Cytoplasm</keyword>
<keyword id="KW-0342">GTP-binding</keyword>
<keyword id="KW-0378">Hydrolase</keyword>
<keyword id="KW-0460">Magnesium</keyword>
<keyword id="KW-0479">Metal-binding</keyword>
<keyword id="KW-0547">Nucleotide-binding</keyword>
<keyword id="KW-0630">Potassium</keyword>
<keyword id="KW-1185">Reference proteome</keyword>
<keyword id="KW-0819">tRNA processing</keyword>
<accession>Q3B1B4</accession>
<gene>
    <name evidence="1" type="primary">mnmE</name>
    <name evidence="1" type="synonym">trmE</name>
    <name type="ordered locus">Plut_2025</name>
</gene>
<name>MNME_CHLL3</name>
<reference key="1">
    <citation type="submission" date="2005-08" db="EMBL/GenBank/DDBJ databases">
        <title>Complete sequence of Pelodictyon luteolum DSM 273.</title>
        <authorList>
            <consortium name="US DOE Joint Genome Institute"/>
            <person name="Copeland A."/>
            <person name="Lucas S."/>
            <person name="Lapidus A."/>
            <person name="Barry K."/>
            <person name="Detter J.C."/>
            <person name="Glavina T."/>
            <person name="Hammon N."/>
            <person name="Israni S."/>
            <person name="Pitluck S."/>
            <person name="Bryant D."/>
            <person name="Schmutz J."/>
            <person name="Larimer F."/>
            <person name="Land M."/>
            <person name="Kyrpides N."/>
            <person name="Ivanova N."/>
            <person name="Richardson P."/>
        </authorList>
    </citation>
    <scope>NUCLEOTIDE SEQUENCE [LARGE SCALE GENOMIC DNA]</scope>
    <source>
        <strain>DSM 273 / BCRC 81028 / 2530</strain>
    </source>
</reference>
<sequence>MPASVVLQQPDIPIAAIATPVGVGALAIVRMSGKGVFGIADRAFRKKSGKAFSFEAAEGFTAHVGTLFDGEGMVDEVVALVFRAPSSFTMEDMVEFTCHGGPVVVRRVLAALLDGGCRLAEPGEFTRRAFLNGRIDLLQAEAIGEMIHARTDGAFRTAVTQMQGGLSRRLLEMREGLLQSCALLELELDFSEEDVEFQSREELRGEVIRLQTELSGLVDSYQHGRLLSEGVSTVIAGRPNAGKSTLLNKLLGEERSIVSHMPGTTRDYIEECFVYDKTMFRLTDTAGLRESEEDVEHEGIERSYRKISEADLILYMLDVSGEGFREEAVSAAALCAGHPEARMILLANKTDLVKDSALRIAALETAAGSPVVPMAARSGEGIEELKLLMASMVEGLDKLHEASVLVTSLRHYEALRNASDALHNALGLIEGGEATELIAFELRSALDYVGEITGKVVSEELLNTIFGQFCIGK</sequence>
<dbReference type="EC" id="3.6.-.-" evidence="1"/>
<dbReference type="EMBL" id="CP000096">
    <property type="protein sequence ID" value="ABB24867.1"/>
    <property type="molecule type" value="Genomic_DNA"/>
</dbReference>
<dbReference type="RefSeq" id="WP_011358737.1">
    <property type="nucleotide sequence ID" value="NC_007512.1"/>
</dbReference>
<dbReference type="SMR" id="Q3B1B4"/>
<dbReference type="STRING" id="319225.Plut_2025"/>
<dbReference type="KEGG" id="plt:Plut_2025"/>
<dbReference type="eggNOG" id="COG0486">
    <property type="taxonomic scope" value="Bacteria"/>
</dbReference>
<dbReference type="HOGENOM" id="CLU_019624_4_1_10"/>
<dbReference type="OrthoDB" id="9805918at2"/>
<dbReference type="Proteomes" id="UP000002709">
    <property type="component" value="Chromosome"/>
</dbReference>
<dbReference type="GO" id="GO:0005829">
    <property type="term" value="C:cytosol"/>
    <property type="evidence" value="ECO:0007669"/>
    <property type="project" value="TreeGrafter"/>
</dbReference>
<dbReference type="GO" id="GO:0005525">
    <property type="term" value="F:GTP binding"/>
    <property type="evidence" value="ECO:0007669"/>
    <property type="project" value="UniProtKB-UniRule"/>
</dbReference>
<dbReference type="GO" id="GO:0003924">
    <property type="term" value="F:GTPase activity"/>
    <property type="evidence" value="ECO:0007669"/>
    <property type="project" value="UniProtKB-UniRule"/>
</dbReference>
<dbReference type="GO" id="GO:0046872">
    <property type="term" value="F:metal ion binding"/>
    <property type="evidence" value="ECO:0007669"/>
    <property type="project" value="UniProtKB-KW"/>
</dbReference>
<dbReference type="GO" id="GO:0030488">
    <property type="term" value="P:tRNA methylation"/>
    <property type="evidence" value="ECO:0007669"/>
    <property type="project" value="TreeGrafter"/>
</dbReference>
<dbReference type="GO" id="GO:0002098">
    <property type="term" value="P:tRNA wobble uridine modification"/>
    <property type="evidence" value="ECO:0007669"/>
    <property type="project" value="TreeGrafter"/>
</dbReference>
<dbReference type="CDD" id="cd04164">
    <property type="entry name" value="trmE"/>
    <property type="match status" value="1"/>
</dbReference>
<dbReference type="CDD" id="cd14858">
    <property type="entry name" value="TrmE_N"/>
    <property type="match status" value="1"/>
</dbReference>
<dbReference type="FunFam" id="3.30.1360.120:FF:000003">
    <property type="entry name" value="tRNA modification GTPase MnmE"/>
    <property type="match status" value="1"/>
</dbReference>
<dbReference type="Gene3D" id="3.40.50.300">
    <property type="entry name" value="P-loop containing nucleotide triphosphate hydrolases"/>
    <property type="match status" value="1"/>
</dbReference>
<dbReference type="Gene3D" id="3.30.1360.120">
    <property type="entry name" value="Probable tRNA modification gtpase trme, domain 1"/>
    <property type="match status" value="1"/>
</dbReference>
<dbReference type="Gene3D" id="1.20.120.430">
    <property type="entry name" value="tRNA modification GTPase MnmE domain 2"/>
    <property type="match status" value="1"/>
</dbReference>
<dbReference type="HAMAP" id="MF_00379">
    <property type="entry name" value="GTPase_MnmE"/>
    <property type="match status" value="1"/>
</dbReference>
<dbReference type="InterPro" id="IPR031168">
    <property type="entry name" value="G_TrmE"/>
</dbReference>
<dbReference type="InterPro" id="IPR006073">
    <property type="entry name" value="GTP-bd"/>
</dbReference>
<dbReference type="InterPro" id="IPR018948">
    <property type="entry name" value="GTP-bd_TrmE_N"/>
</dbReference>
<dbReference type="InterPro" id="IPR004520">
    <property type="entry name" value="GTPase_MnmE"/>
</dbReference>
<dbReference type="InterPro" id="IPR027368">
    <property type="entry name" value="MnmE_dom2"/>
</dbReference>
<dbReference type="InterPro" id="IPR025867">
    <property type="entry name" value="MnmE_helical"/>
</dbReference>
<dbReference type="InterPro" id="IPR027417">
    <property type="entry name" value="P-loop_NTPase"/>
</dbReference>
<dbReference type="InterPro" id="IPR005225">
    <property type="entry name" value="Small_GTP-bd"/>
</dbReference>
<dbReference type="InterPro" id="IPR027266">
    <property type="entry name" value="TrmE/GcvT_dom1"/>
</dbReference>
<dbReference type="NCBIfam" id="TIGR00450">
    <property type="entry name" value="mnmE_trmE_thdF"/>
    <property type="match status" value="1"/>
</dbReference>
<dbReference type="NCBIfam" id="TIGR00231">
    <property type="entry name" value="small_GTP"/>
    <property type="match status" value="1"/>
</dbReference>
<dbReference type="PANTHER" id="PTHR42714">
    <property type="entry name" value="TRNA MODIFICATION GTPASE GTPBP3"/>
    <property type="match status" value="1"/>
</dbReference>
<dbReference type="PANTHER" id="PTHR42714:SF2">
    <property type="entry name" value="TRNA MODIFICATION GTPASE GTPBP3, MITOCHONDRIAL"/>
    <property type="match status" value="1"/>
</dbReference>
<dbReference type="Pfam" id="PF01926">
    <property type="entry name" value="MMR_HSR1"/>
    <property type="match status" value="1"/>
</dbReference>
<dbReference type="Pfam" id="PF12631">
    <property type="entry name" value="MnmE_helical"/>
    <property type="match status" value="1"/>
</dbReference>
<dbReference type="Pfam" id="PF10396">
    <property type="entry name" value="TrmE_N"/>
    <property type="match status" value="1"/>
</dbReference>
<dbReference type="SUPFAM" id="SSF52540">
    <property type="entry name" value="P-loop containing nucleoside triphosphate hydrolases"/>
    <property type="match status" value="1"/>
</dbReference>
<dbReference type="SUPFAM" id="SSF116878">
    <property type="entry name" value="TrmE connector domain"/>
    <property type="match status" value="1"/>
</dbReference>
<dbReference type="PROSITE" id="PS51709">
    <property type="entry name" value="G_TRME"/>
    <property type="match status" value="1"/>
</dbReference>
<proteinExistence type="inferred from homology"/>
<protein>
    <recommendedName>
        <fullName evidence="1">tRNA modification GTPase MnmE</fullName>
        <ecNumber evidence="1">3.6.-.-</ecNumber>
    </recommendedName>
</protein>